<dbReference type="EMBL" id="CP001072">
    <property type="protein sequence ID" value="ACD47570.1"/>
    <property type="molecule type" value="Genomic_DNA"/>
</dbReference>
<dbReference type="RefSeq" id="WP_000521030.1">
    <property type="nucleotide sequence ID" value="NC_010698.2"/>
</dbReference>
<dbReference type="SMR" id="B2URT8"/>
<dbReference type="KEGG" id="hps:HPSH_00550"/>
<dbReference type="HOGENOM" id="CLU_005965_2_1_7"/>
<dbReference type="GO" id="GO:0005524">
    <property type="term" value="F:ATP binding"/>
    <property type="evidence" value="ECO:0007669"/>
    <property type="project" value="UniProtKB-UniRule"/>
</dbReference>
<dbReference type="GO" id="GO:0140662">
    <property type="term" value="F:ATP-dependent protein folding chaperone"/>
    <property type="evidence" value="ECO:0007669"/>
    <property type="project" value="InterPro"/>
</dbReference>
<dbReference type="GO" id="GO:0051082">
    <property type="term" value="F:unfolded protein binding"/>
    <property type="evidence" value="ECO:0007669"/>
    <property type="project" value="InterPro"/>
</dbReference>
<dbReference type="CDD" id="cd10234">
    <property type="entry name" value="ASKHA_NBD_HSP70_DnaK-like"/>
    <property type="match status" value="1"/>
</dbReference>
<dbReference type="FunFam" id="2.60.34.10:FF:000014">
    <property type="entry name" value="Chaperone protein DnaK HSP70"/>
    <property type="match status" value="1"/>
</dbReference>
<dbReference type="FunFam" id="1.20.1270.10:FF:000001">
    <property type="entry name" value="Molecular chaperone DnaK"/>
    <property type="match status" value="1"/>
</dbReference>
<dbReference type="FunFam" id="3.30.420.40:FF:000004">
    <property type="entry name" value="Molecular chaperone DnaK"/>
    <property type="match status" value="1"/>
</dbReference>
<dbReference type="FunFam" id="3.90.640.10:FF:000003">
    <property type="entry name" value="Molecular chaperone DnaK"/>
    <property type="match status" value="1"/>
</dbReference>
<dbReference type="Gene3D" id="1.20.1270.10">
    <property type="match status" value="1"/>
</dbReference>
<dbReference type="Gene3D" id="3.30.420.40">
    <property type="match status" value="2"/>
</dbReference>
<dbReference type="Gene3D" id="3.90.640.10">
    <property type="entry name" value="Actin, Chain A, domain 4"/>
    <property type="match status" value="1"/>
</dbReference>
<dbReference type="Gene3D" id="2.60.34.10">
    <property type="entry name" value="Substrate Binding Domain Of DNAk, Chain A, domain 1"/>
    <property type="match status" value="1"/>
</dbReference>
<dbReference type="HAMAP" id="MF_00332">
    <property type="entry name" value="DnaK"/>
    <property type="match status" value="1"/>
</dbReference>
<dbReference type="InterPro" id="IPR043129">
    <property type="entry name" value="ATPase_NBD"/>
</dbReference>
<dbReference type="InterPro" id="IPR012725">
    <property type="entry name" value="Chaperone_DnaK"/>
</dbReference>
<dbReference type="InterPro" id="IPR018181">
    <property type="entry name" value="Heat_shock_70_CS"/>
</dbReference>
<dbReference type="InterPro" id="IPR029048">
    <property type="entry name" value="HSP70_C_sf"/>
</dbReference>
<dbReference type="InterPro" id="IPR029047">
    <property type="entry name" value="HSP70_peptide-bd_sf"/>
</dbReference>
<dbReference type="InterPro" id="IPR013126">
    <property type="entry name" value="Hsp_70_fam"/>
</dbReference>
<dbReference type="NCBIfam" id="NF001413">
    <property type="entry name" value="PRK00290.1"/>
    <property type="match status" value="1"/>
</dbReference>
<dbReference type="NCBIfam" id="NF003520">
    <property type="entry name" value="PRK05183.1"/>
    <property type="match status" value="1"/>
</dbReference>
<dbReference type="NCBIfam" id="TIGR02350">
    <property type="entry name" value="prok_dnaK"/>
    <property type="match status" value="1"/>
</dbReference>
<dbReference type="PANTHER" id="PTHR19375">
    <property type="entry name" value="HEAT SHOCK PROTEIN 70KDA"/>
    <property type="match status" value="1"/>
</dbReference>
<dbReference type="Pfam" id="PF00012">
    <property type="entry name" value="HSP70"/>
    <property type="match status" value="1"/>
</dbReference>
<dbReference type="PRINTS" id="PR00301">
    <property type="entry name" value="HEATSHOCK70"/>
</dbReference>
<dbReference type="SUPFAM" id="SSF53067">
    <property type="entry name" value="Actin-like ATPase domain"/>
    <property type="match status" value="2"/>
</dbReference>
<dbReference type="SUPFAM" id="SSF100934">
    <property type="entry name" value="Heat shock protein 70kD (HSP70), C-terminal subdomain"/>
    <property type="match status" value="1"/>
</dbReference>
<dbReference type="SUPFAM" id="SSF100920">
    <property type="entry name" value="Heat shock protein 70kD (HSP70), peptide-binding domain"/>
    <property type="match status" value="1"/>
</dbReference>
<dbReference type="PROSITE" id="PS00297">
    <property type="entry name" value="HSP70_1"/>
    <property type="match status" value="1"/>
</dbReference>
<dbReference type="PROSITE" id="PS00329">
    <property type="entry name" value="HSP70_2"/>
    <property type="match status" value="1"/>
</dbReference>
<dbReference type="PROSITE" id="PS01036">
    <property type="entry name" value="HSP70_3"/>
    <property type="match status" value="1"/>
</dbReference>
<organism>
    <name type="scientific">Helicobacter pylori (strain Shi470)</name>
    <dbReference type="NCBI Taxonomy" id="512562"/>
    <lineage>
        <taxon>Bacteria</taxon>
        <taxon>Pseudomonadati</taxon>
        <taxon>Campylobacterota</taxon>
        <taxon>Epsilonproteobacteria</taxon>
        <taxon>Campylobacterales</taxon>
        <taxon>Helicobacteraceae</taxon>
        <taxon>Helicobacter</taxon>
    </lineage>
</organism>
<accession>B2URT8</accession>
<name>DNAK_HELPS</name>
<comment type="function">
    <text evidence="1">Acts as a chaperone.</text>
</comment>
<comment type="induction">
    <text evidence="1">By stress conditions e.g. heat shock.</text>
</comment>
<comment type="similarity">
    <text evidence="1">Belongs to the heat shock protein 70 family.</text>
</comment>
<feature type="chain" id="PRO_1000119714" description="Chaperone protein DnaK">
    <location>
        <begin position="1"/>
        <end position="620"/>
    </location>
</feature>
<feature type="region of interest" description="Disordered" evidence="2">
    <location>
        <begin position="597"/>
        <end position="620"/>
    </location>
</feature>
<feature type="modified residue" description="Phosphothreonine; by autocatalysis" evidence="1">
    <location>
        <position position="197"/>
    </location>
</feature>
<protein>
    <recommendedName>
        <fullName evidence="1">Chaperone protein DnaK</fullName>
    </recommendedName>
    <alternativeName>
        <fullName evidence="1">HSP70</fullName>
    </alternativeName>
    <alternativeName>
        <fullName evidence="1">Heat shock 70 kDa protein</fullName>
    </alternativeName>
    <alternativeName>
        <fullName evidence="1">Heat shock protein 70</fullName>
    </alternativeName>
</protein>
<evidence type="ECO:0000255" key="1">
    <source>
        <dbReference type="HAMAP-Rule" id="MF_00332"/>
    </source>
</evidence>
<evidence type="ECO:0000256" key="2">
    <source>
        <dbReference type="SAM" id="MobiDB-lite"/>
    </source>
</evidence>
<keyword id="KW-0067">ATP-binding</keyword>
<keyword id="KW-0143">Chaperone</keyword>
<keyword id="KW-0547">Nucleotide-binding</keyword>
<keyword id="KW-0597">Phosphoprotein</keyword>
<keyword id="KW-0346">Stress response</keyword>
<gene>
    <name evidence="1" type="primary">dnaK</name>
    <name type="ordered locus">HPSH_00550</name>
</gene>
<proteinExistence type="inferred from homology"/>
<reference key="1">
    <citation type="submission" date="2008-05" db="EMBL/GenBank/DDBJ databases">
        <title>Genome sequence of Helicobacter pylori from the remote Amazon: traces of Asian ancestry of the first Americans.</title>
        <authorList>
            <person name="Kersulyte D."/>
            <person name="Kalia A."/>
            <person name="Gilman R.H."/>
            <person name="Berg D.E."/>
        </authorList>
    </citation>
    <scope>NUCLEOTIDE SEQUENCE [LARGE SCALE GENOMIC DNA]</scope>
    <source>
        <strain>Shi470</strain>
    </source>
</reference>
<sequence>MGKVIGIDLGTTNSAMAVYEGNEAKIIANKEGKNTTPSIVAFTDKGEILVGESAKRQAVTNPEKTIYSIKRIMGLMFNEDKAKEAEKRLPYKIVDRNGACAIEISGKVYTPQEISAKILMKLKEDAESYLGESVTEAVITVPAYFNDSQRKATKEAGTIAGLNVLRIINEPTSAALAYGLDKKESEKIMVYDLGGGTFDVTVLETGDNVVEVLATGGDAFLGGDDFDNRVIDFLASEFKSETGIEIKNDVMALQRLKEAAENAKKELSSAMETEINLPFITADATGPKHLVKKLTRAKFESLTEDLVEETISKIESVIKDAGLTKNEISEVVMVGGSTRIPKVQERVKAFINKDLNKSVNPDEVVAVGASIQGGVLKGDVKDVLLLDVTPLSLGIETLGGVMTKVIDRGTTIPAKKSQVFSTAEDNQPAVSIMVLQGERELARDNKSLGKFDLQGIAPAPRGVPQIEVTFDIDANGILTVSAQDKNTGKSQEIKISGSSGLSDSEIEKMVKDAELHKEEDARKKEVIEARNHADSLAHQTQKSLDEHKTNLNENDANEIQNAINALKECVKNDNATKAELEDKTKLLAQAAQKLGEAMANKNNAEQPKKKDDDVIDAEVE</sequence>